<organism>
    <name type="scientific">Shigella sonnei (strain Ss046)</name>
    <dbReference type="NCBI Taxonomy" id="300269"/>
    <lineage>
        <taxon>Bacteria</taxon>
        <taxon>Pseudomonadati</taxon>
        <taxon>Pseudomonadota</taxon>
        <taxon>Gammaproteobacteria</taxon>
        <taxon>Enterobacterales</taxon>
        <taxon>Enterobacteriaceae</taxon>
        <taxon>Shigella</taxon>
    </lineage>
</organism>
<protein>
    <recommendedName>
        <fullName evidence="1">Dual-action ribosomal maturation protein DarP</fullName>
    </recommendedName>
    <alternativeName>
        <fullName evidence="1">Large ribosomal subunit assembly factor DarP</fullName>
    </alternativeName>
</protein>
<proteinExistence type="inferred from homology"/>
<gene>
    <name evidence="1" type="primary">darP</name>
    <name type="ordered locus">SSON_4415</name>
</gene>
<comment type="function">
    <text evidence="1">Member of a network of 50S ribosomal subunit biogenesis factors which assembles along the 30S-50S interface, preventing incorrect 23S rRNA structures from forming. Promotes peptidyl transferase center (PTC) maturation.</text>
</comment>
<comment type="subcellular location">
    <subcellularLocation>
        <location evidence="1">Cytoplasm</location>
    </subcellularLocation>
    <text evidence="1">Associates with late stage pre-50S ribosomal subunits.</text>
</comment>
<comment type="similarity">
    <text evidence="1">Belongs to the DarP family.</text>
</comment>
<dbReference type="EMBL" id="CP000038">
    <property type="protein sequence ID" value="AAZ90895.1"/>
    <property type="molecule type" value="Genomic_DNA"/>
</dbReference>
<dbReference type="SMR" id="Q3YUB7"/>
<dbReference type="KEGG" id="ssn:SSON_4415"/>
<dbReference type="HOGENOM" id="CLU_106757_2_0_6"/>
<dbReference type="Proteomes" id="UP000002529">
    <property type="component" value="Chromosome"/>
</dbReference>
<dbReference type="GO" id="GO:0005829">
    <property type="term" value="C:cytosol"/>
    <property type="evidence" value="ECO:0007669"/>
    <property type="project" value="TreeGrafter"/>
</dbReference>
<dbReference type="GO" id="GO:0043022">
    <property type="term" value="F:ribosome binding"/>
    <property type="evidence" value="ECO:0007669"/>
    <property type="project" value="UniProtKB-UniRule"/>
</dbReference>
<dbReference type="GO" id="GO:0019843">
    <property type="term" value="F:rRNA binding"/>
    <property type="evidence" value="ECO:0007669"/>
    <property type="project" value="UniProtKB-UniRule"/>
</dbReference>
<dbReference type="GO" id="GO:1902626">
    <property type="term" value="P:assembly of large subunit precursor of preribosome"/>
    <property type="evidence" value="ECO:0007669"/>
    <property type="project" value="UniProtKB-UniRule"/>
</dbReference>
<dbReference type="CDD" id="cd16331">
    <property type="entry name" value="YjgA-like"/>
    <property type="match status" value="1"/>
</dbReference>
<dbReference type="FunFam" id="1.10.60.30:FF:000001">
    <property type="entry name" value="UPF0307 protein YjgA"/>
    <property type="match status" value="1"/>
</dbReference>
<dbReference type="FunFam" id="1.10.60.30:FF:000002">
    <property type="entry name" value="UPF0307 protein YjgA"/>
    <property type="match status" value="1"/>
</dbReference>
<dbReference type="Gene3D" id="1.10.60.30">
    <property type="entry name" value="PSPTO4464-like domains"/>
    <property type="match status" value="2"/>
</dbReference>
<dbReference type="HAMAP" id="MF_00765">
    <property type="entry name" value="DarP"/>
    <property type="match status" value="1"/>
</dbReference>
<dbReference type="InterPro" id="IPR006839">
    <property type="entry name" value="DarP"/>
</dbReference>
<dbReference type="InterPro" id="IPR023153">
    <property type="entry name" value="DarP_sf"/>
</dbReference>
<dbReference type="NCBIfam" id="NF003593">
    <property type="entry name" value="PRK05255.1-1"/>
    <property type="match status" value="1"/>
</dbReference>
<dbReference type="PANTHER" id="PTHR38101">
    <property type="entry name" value="UPF0307 PROTEIN YJGA"/>
    <property type="match status" value="1"/>
</dbReference>
<dbReference type="PANTHER" id="PTHR38101:SF1">
    <property type="entry name" value="UPF0307 PROTEIN YJGA"/>
    <property type="match status" value="1"/>
</dbReference>
<dbReference type="Pfam" id="PF04751">
    <property type="entry name" value="DarP"/>
    <property type="match status" value="1"/>
</dbReference>
<dbReference type="PIRSF" id="PIRSF016183">
    <property type="entry name" value="UCP016183"/>
    <property type="match status" value="1"/>
</dbReference>
<dbReference type="SUPFAM" id="SSF158710">
    <property type="entry name" value="PSPTO4464-like"/>
    <property type="match status" value="1"/>
</dbReference>
<keyword id="KW-0963">Cytoplasm</keyword>
<keyword id="KW-1185">Reference proteome</keyword>
<keyword id="KW-0690">Ribosome biogenesis</keyword>
<keyword id="KW-0694">RNA-binding</keyword>
<keyword id="KW-0699">rRNA-binding</keyword>
<sequence length="183" mass="21359">MTKQPEDWLDDVPGDDIEDEDDEIIWVSKSEIKRDAEELKRLGAEIVDLGKNALDKIPLDADLRAAIELAQRIKMEGRRRQLQLIGKMLRQRDVEPIRQALDKLKNRHNQQVVLFHKLENLRDRLIDQGDDAIAEVLNLWPDADRQQLRTLIRNAKKEKEGNKPPKSARQIFQYLRELAENEG</sequence>
<reference key="1">
    <citation type="journal article" date="2005" name="Nucleic Acids Res.">
        <title>Genome dynamics and diversity of Shigella species, the etiologic agents of bacillary dysentery.</title>
        <authorList>
            <person name="Yang F."/>
            <person name="Yang J."/>
            <person name="Zhang X."/>
            <person name="Chen L."/>
            <person name="Jiang Y."/>
            <person name="Yan Y."/>
            <person name="Tang X."/>
            <person name="Wang J."/>
            <person name="Xiong Z."/>
            <person name="Dong J."/>
            <person name="Xue Y."/>
            <person name="Zhu Y."/>
            <person name="Xu X."/>
            <person name="Sun L."/>
            <person name="Chen S."/>
            <person name="Nie H."/>
            <person name="Peng J."/>
            <person name="Xu J."/>
            <person name="Wang Y."/>
            <person name="Yuan Z."/>
            <person name="Wen Y."/>
            <person name="Yao Z."/>
            <person name="Shen Y."/>
            <person name="Qiang B."/>
            <person name="Hou Y."/>
            <person name="Yu J."/>
            <person name="Jin Q."/>
        </authorList>
    </citation>
    <scope>NUCLEOTIDE SEQUENCE [LARGE SCALE GENOMIC DNA]</scope>
    <source>
        <strain>Ss046</strain>
    </source>
</reference>
<name>DARP_SHISS</name>
<evidence type="ECO:0000255" key="1">
    <source>
        <dbReference type="HAMAP-Rule" id="MF_00765"/>
    </source>
</evidence>
<accession>Q3YUB7</accession>
<feature type="chain" id="PRO_0000257642" description="Dual-action ribosomal maturation protein DarP">
    <location>
        <begin position="1"/>
        <end position="183"/>
    </location>
</feature>